<protein>
    <recommendedName>
        <fullName>Ras-related protein Rab-3A</fullName>
        <ecNumber evidence="2">3.6.5.2</ecNumber>
    </recommendedName>
</protein>
<keyword id="KW-1003">Cell membrane</keyword>
<keyword id="KW-0966">Cell projection</keyword>
<keyword id="KW-0963">Cytoplasm</keyword>
<keyword id="KW-0968">Cytoplasmic vesicle</keyword>
<keyword id="KW-0268">Exocytosis</keyword>
<keyword id="KW-0342">GTP-binding</keyword>
<keyword id="KW-0378">Hydrolase</keyword>
<keyword id="KW-0449">Lipoprotein</keyword>
<keyword id="KW-0458">Lysosome</keyword>
<keyword id="KW-0460">Magnesium</keyword>
<keyword id="KW-0472">Membrane</keyword>
<keyword id="KW-0479">Metal-binding</keyword>
<keyword id="KW-0488">Methylation</keyword>
<keyword id="KW-0547">Nucleotide-binding</keyword>
<keyword id="KW-0597">Phosphoprotein</keyword>
<keyword id="KW-0636">Prenylation</keyword>
<keyword id="KW-0653">Protein transport</keyword>
<keyword id="KW-1185">Reference proteome</keyword>
<keyword id="KW-0770">Synapse</keyword>
<keyword id="KW-0813">Transport</keyword>
<evidence type="ECO:0000250" key="1"/>
<evidence type="ECO:0000250" key="2">
    <source>
        <dbReference type="UniProtKB" id="P20336"/>
    </source>
</evidence>
<evidence type="ECO:0000250" key="3">
    <source>
        <dbReference type="UniProtKB" id="P63011"/>
    </source>
</evidence>
<evidence type="ECO:0000250" key="4">
    <source>
        <dbReference type="UniProtKB" id="P63012"/>
    </source>
</evidence>
<evidence type="ECO:0000256" key="5">
    <source>
        <dbReference type="SAM" id="MobiDB-lite"/>
    </source>
</evidence>
<evidence type="ECO:0000305" key="6"/>
<accession>Q4R4R9</accession>
<sequence length="220" mass="24984">MASATDSRYGQKESSDQNFDYMFKILIIGNSSVGKTSFLFRYADDSFTPAFVSTVGIDFKVKTIYRNDKRIKLQIWDTAGQERYRTITTAYYRGAMGFILMYDITNEESFNAVQDWSTQIKTYSWDNAQVLLVGNKCDMEDERVVSSERGRQLADHLGFEFFEASAKDNINVKQTFERLVDVICEKMSESLDTADPAVTGAKQGPQLSDQQVPPHQDCAC</sequence>
<name>RAB3A_MACFA</name>
<comment type="function">
    <text evidence="2 3 4">The small GTPases Rab are key regulators of intracellular membrane trafficking, from the formation of transport vesicles to their fusion with membranes (By similarity). Rabs cycle between an inactive GDP-bound form and an active GTP-bound form that is able to recruit to membranes different sets of downstream effectors directly responsible for vesicle formation, movement, tethering and fusion (By similarity). RAB3A plays a central role in regulated exocytosis and secretion. Controls the recruitment, tethering and docking of secretory vesicles to the plasma membrane (By similarity). Upon stimulation, switches to its active GTP-bound form, cycles to vesicles and recruits effectors such as RIMS1, RIMS2, Rabphilin-3A/RPH3A, RPH3AL or SYTL4 to help the docking of vesicules onto the plasma membrane (By similarity). Upon GTP hydrolysis by GTPase-activating protein, dissociates from the vesicle membrane allowing the exocytosis to proceed (By similarity). Stimulates insulin secretion through interaction with RIMS2 or RPH3AL effectors in pancreatic beta cells (By similarity). Regulates calcium-dependent lysosome exocytosis and plasma membrane repair (PMR) via the interaction with 2 effectors, SYTL4 and myosin-9/MYH9 (By similarity). Acts as a positive regulator of acrosome content secretion in sperm cells by interacting with RIMS1 (By similarity). Also plays a role in the regulation of dopamine release by interacting with synaptotagmin I/SYT (By similarity).</text>
</comment>
<comment type="catalytic activity">
    <reaction evidence="2">
        <text>GTP + H2O = GDP + phosphate + H(+)</text>
        <dbReference type="Rhea" id="RHEA:19669"/>
        <dbReference type="ChEBI" id="CHEBI:15377"/>
        <dbReference type="ChEBI" id="CHEBI:15378"/>
        <dbReference type="ChEBI" id="CHEBI:37565"/>
        <dbReference type="ChEBI" id="CHEBI:43474"/>
        <dbReference type="ChEBI" id="CHEBI:58189"/>
        <dbReference type="EC" id="3.6.5.2"/>
    </reaction>
    <physiologicalReaction direction="left-to-right" evidence="2">
        <dbReference type="Rhea" id="RHEA:19670"/>
    </physiologicalReaction>
</comment>
<comment type="cofactor">
    <cofactor evidence="4">
        <name>Mg(2+)</name>
        <dbReference type="ChEBI" id="CHEBI:18420"/>
    </cofactor>
</comment>
<comment type="activity regulation">
    <text evidence="2">Regulated by guanine nucleotide exchange factors (GEFs) including RAB3IL1 and MADD which promote the exchange of bound GDP for free GTP. Regulated by GTPase activating proteins (GAPs) including RAB3GAP1 and TBC1D10B which increase the GTP hydrolysis activity. Inhibited by GDP dissociation inhibitors (GDIs) which prevent Rab-GDP dissociation.</text>
</comment>
<comment type="subunit">
    <text evidence="2 3 4">Interacts with RIMS1 and RIMS2 (By similarity). Interacts with Rabphilin-3A/RPH3A and Rab effector Noc2/RPH3AL (By similarity). Interacts with SYTL4 (By similarity). Interacts with RAB3IP (By similarity). Interacts with SGSM1 and SGSM3 (By similarity). Interacts with SYT1 (By similarity). Interacts with MYH9; this interaction is essential for lysosome exocytosis and plasma membrane repair (By similarity). Interacts with STXBP1; this interaction promotes RAB3A dissociation from the vesicle membrane (By similarity). Interacts with GDI1, GDI2, CHM and CHML; phosphorylation at Thr-86 disrupts these interactions (By similarity). Interacts with MADD (via uDENN domain); the GTP-bound form is preferred for interaction (By similarity).</text>
</comment>
<comment type="subcellular location">
    <subcellularLocation>
        <location evidence="4">Cytoplasm</location>
        <location evidence="4">Cytosol</location>
    </subcellularLocation>
    <subcellularLocation>
        <location evidence="2">Lysosome</location>
    </subcellularLocation>
    <subcellularLocation>
        <location evidence="4">Cytoplasmic vesicle</location>
        <location evidence="4">Secretory vesicle</location>
    </subcellularLocation>
    <subcellularLocation>
        <location evidence="3">Cell projection</location>
        <location evidence="3">Axon</location>
    </subcellularLocation>
    <subcellularLocation>
        <location evidence="6">Cell membrane</location>
        <topology evidence="6">Lipid-anchor</topology>
        <orientation evidence="6">Cytoplasmic side</orientation>
    </subcellularLocation>
    <subcellularLocation>
        <location evidence="3">Presynapse</location>
    </subcellularLocation>
    <subcellularLocation>
        <location evidence="3">Postsynapse</location>
    </subcellularLocation>
    <text evidence="4">Cycles between a vesicle-associated GTP-bound form and a cytosolic GDP-bound form.</text>
</comment>
<comment type="domain">
    <text evidence="4">Switch 1, switch 2 and the interswitch regions are characteristic of Rab GTPases and mediate the interactions with Rab downstream effectors. The switch regions undergo conformational changes upon nucleotide binding which drives interaction with specific sets of effector proteins, with most effectors only binding to GTP-bound Rab.</text>
</comment>
<comment type="PTM">
    <text evidence="2">Phosphorylation of Thr-86 in the switch II region by LRRK2 prevents the association of RAB regulatory proteins, including CHM, CHML and RAB GDP dissociation inhibitors GDI1 and GDI2.</text>
</comment>
<comment type="similarity">
    <text evidence="6">Belongs to the small GTPase superfamily. Rab family.</text>
</comment>
<feature type="chain" id="PRO_0000121077" description="Ras-related protein Rab-3A">
    <location>
        <begin position="1"/>
        <end position="220"/>
    </location>
</feature>
<feature type="region of interest" description="Disordered" evidence="5">
    <location>
        <begin position="194"/>
        <end position="220"/>
    </location>
</feature>
<feature type="short sequence motif" description="Switch 1" evidence="4">
    <location>
        <begin position="49"/>
        <end position="58"/>
    </location>
</feature>
<feature type="short sequence motif" description="Switch 2" evidence="4">
    <location>
        <begin position="80"/>
        <end position="96"/>
    </location>
</feature>
<feature type="binding site" evidence="4">
    <location>
        <position position="31"/>
    </location>
    <ligand>
        <name>GTP</name>
        <dbReference type="ChEBI" id="CHEBI:37565"/>
    </ligand>
</feature>
<feature type="binding site" evidence="4">
    <location>
        <position position="32"/>
    </location>
    <ligand>
        <name>GTP</name>
        <dbReference type="ChEBI" id="CHEBI:37565"/>
    </ligand>
</feature>
<feature type="binding site" evidence="4">
    <location>
        <position position="33"/>
    </location>
    <ligand>
        <name>GTP</name>
        <dbReference type="ChEBI" id="CHEBI:37565"/>
    </ligand>
</feature>
<feature type="binding site" evidence="4">
    <location>
        <position position="34"/>
    </location>
    <ligand>
        <name>GTP</name>
        <dbReference type="ChEBI" id="CHEBI:37565"/>
    </ligand>
</feature>
<feature type="binding site" evidence="4">
    <location>
        <position position="35"/>
    </location>
    <ligand>
        <name>GTP</name>
        <dbReference type="ChEBI" id="CHEBI:37565"/>
    </ligand>
</feature>
<feature type="binding site" evidence="4">
    <location>
        <position position="36"/>
    </location>
    <ligand>
        <name>GTP</name>
        <dbReference type="ChEBI" id="CHEBI:37565"/>
    </ligand>
</feature>
<feature type="binding site" evidence="4">
    <location>
        <position position="36"/>
    </location>
    <ligand>
        <name>Mg(2+)</name>
        <dbReference type="ChEBI" id="CHEBI:18420"/>
    </ligand>
</feature>
<feature type="binding site" evidence="4">
    <location>
        <position position="37"/>
    </location>
    <ligand>
        <name>GTP</name>
        <dbReference type="ChEBI" id="CHEBI:37565"/>
    </ligand>
</feature>
<feature type="binding site" evidence="4">
    <location>
        <position position="48"/>
    </location>
    <ligand>
        <name>GTP</name>
        <dbReference type="ChEBI" id="CHEBI:37565"/>
    </ligand>
</feature>
<feature type="binding site" evidence="4">
    <location>
        <position position="49"/>
    </location>
    <ligand>
        <name>GTP</name>
        <dbReference type="ChEBI" id="CHEBI:37565"/>
    </ligand>
</feature>
<feature type="binding site" evidence="4">
    <location>
        <position position="53"/>
    </location>
    <ligand>
        <name>GTP</name>
        <dbReference type="ChEBI" id="CHEBI:37565"/>
    </ligand>
</feature>
<feature type="binding site" evidence="4">
    <location>
        <position position="54"/>
    </location>
    <ligand>
        <name>GTP</name>
        <dbReference type="ChEBI" id="CHEBI:37565"/>
    </ligand>
</feature>
<feature type="binding site" evidence="4">
    <location>
        <position position="54"/>
    </location>
    <ligand>
        <name>Mg(2+)</name>
        <dbReference type="ChEBI" id="CHEBI:18420"/>
    </ligand>
</feature>
<feature type="binding site" evidence="4">
    <location>
        <position position="77"/>
    </location>
    <ligand>
        <name>Mg(2+)</name>
        <dbReference type="ChEBI" id="CHEBI:18420"/>
    </ligand>
</feature>
<feature type="binding site" evidence="4">
    <location>
        <position position="80"/>
    </location>
    <ligand>
        <name>GTP</name>
        <dbReference type="ChEBI" id="CHEBI:37565"/>
    </ligand>
</feature>
<feature type="binding site" evidence="4">
    <location>
        <position position="135"/>
    </location>
    <ligand>
        <name>GTP</name>
        <dbReference type="ChEBI" id="CHEBI:37565"/>
    </ligand>
</feature>
<feature type="binding site" evidence="4">
    <location>
        <position position="136"/>
    </location>
    <ligand>
        <name>GTP</name>
        <dbReference type="ChEBI" id="CHEBI:37565"/>
    </ligand>
</feature>
<feature type="binding site" evidence="4">
    <location>
        <position position="138"/>
    </location>
    <ligand>
        <name>GTP</name>
        <dbReference type="ChEBI" id="CHEBI:37565"/>
    </ligand>
</feature>
<feature type="binding site" evidence="4">
    <location>
        <position position="166"/>
    </location>
    <ligand>
        <name>GTP</name>
        <dbReference type="ChEBI" id="CHEBI:37565"/>
    </ligand>
</feature>
<feature type="binding site" evidence="4">
    <location>
        <position position="167"/>
    </location>
    <ligand>
        <name>GTP</name>
        <dbReference type="ChEBI" id="CHEBI:37565"/>
    </ligand>
</feature>
<feature type="modified residue" description="Phosphothreonine" evidence="2">
    <location>
        <position position="86"/>
    </location>
</feature>
<feature type="modified residue" description="Phosphoserine" evidence="3">
    <location>
        <position position="188"/>
    </location>
</feature>
<feature type="modified residue" description="Phosphoserine" evidence="3">
    <location>
        <position position="190"/>
    </location>
</feature>
<feature type="modified residue" description="Cysteine methyl ester" evidence="1">
    <location>
        <position position="220"/>
    </location>
</feature>
<feature type="lipid moiety-binding region" description="S-geranylgeranyl cysteine" evidence="1">
    <location>
        <position position="218"/>
    </location>
</feature>
<feature type="lipid moiety-binding region" description="S-geranylgeranyl cysteine" evidence="1">
    <location>
        <position position="220"/>
    </location>
</feature>
<dbReference type="EC" id="3.6.5.2" evidence="2"/>
<dbReference type="EMBL" id="AB169825">
    <property type="protein sequence ID" value="BAE01906.1"/>
    <property type="molecule type" value="mRNA"/>
</dbReference>
<dbReference type="RefSeq" id="NP_001270908.1">
    <property type="nucleotide sequence ID" value="NM_001283979.1"/>
</dbReference>
<dbReference type="RefSeq" id="XP_045236567.1">
    <property type="nucleotide sequence ID" value="XM_045380632.2"/>
</dbReference>
<dbReference type="SMR" id="Q4R4R9"/>
<dbReference type="STRING" id="9541.ENSMFAP00000015279"/>
<dbReference type="Ensembl" id="ENSMFAT00000065781.2">
    <property type="protein sequence ID" value="ENSMFAP00000015259.2"/>
    <property type="gene ID" value="ENSMFAG00000030826.2"/>
</dbReference>
<dbReference type="GeneID" id="101865846"/>
<dbReference type="VEuPathDB" id="HostDB:ENSMFAG00000030826"/>
<dbReference type="eggNOG" id="KOG0093">
    <property type="taxonomic scope" value="Eukaryota"/>
</dbReference>
<dbReference type="GeneTree" id="ENSGT00940000158959"/>
<dbReference type="OMA" id="CSMARDI"/>
<dbReference type="Proteomes" id="UP000233100">
    <property type="component" value="Chromosome 19"/>
</dbReference>
<dbReference type="Bgee" id="ENSMFAG00000030826">
    <property type="expression patterns" value="Expressed in frontal cortex and 6 other cell types or tissues"/>
</dbReference>
<dbReference type="GO" id="GO:0030424">
    <property type="term" value="C:axon"/>
    <property type="evidence" value="ECO:0007669"/>
    <property type="project" value="UniProtKB-SubCell"/>
</dbReference>
<dbReference type="GO" id="GO:0005829">
    <property type="term" value="C:cytosol"/>
    <property type="evidence" value="ECO:0007669"/>
    <property type="project" value="UniProtKB-SubCell"/>
</dbReference>
<dbReference type="GO" id="GO:0005764">
    <property type="term" value="C:lysosome"/>
    <property type="evidence" value="ECO:0007669"/>
    <property type="project" value="UniProtKB-SubCell"/>
</dbReference>
<dbReference type="GO" id="GO:0005886">
    <property type="term" value="C:plasma membrane"/>
    <property type="evidence" value="ECO:0007669"/>
    <property type="project" value="UniProtKB-SubCell"/>
</dbReference>
<dbReference type="GO" id="GO:0098794">
    <property type="term" value="C:postsynapse"/>
    <property type="evidence" value="ECO:0000250"/>
    <property type="project" value="UniProtKB"/>
</dbReference>
<dbReference type="GO" id="GO:0098793">
    <property type="term" value="C:presynapse"/>
    <property type="evidence" value="ECO:0000250"/>
    <property type="project" value="UniProtKB"/>
</dbReference>
<dbReference type="GO" id="GO:0048786">
    <property type="term" value="C:presynaptic active zone"/>
    <property type="evidence" value="ECO:0000250"/>
    <property type="project" value="UniProtKB"/>
</dbReference>
<dbReference type="GO" id="GO:0030133">
    <property type="term" value="C:transport vesicle"/>
    <property type="evidence" value="ECO:0007669"/>
    <property type="project" value="UniProtKB-SubCell"/>
</dbReference>
<dbReference type="GO" id="GO:0005525">
    <property type="term" value="F:GTP binding"/>
    <property type="evidence" value="ECO:0007669"/>
    <property type="project" value="UniProtKB-KW"/>
</dbReference>
<dbReference type="GO" id="GO:0003924">
    <property type="term" value="F:GTPase activity"/>
    <property type="evidence" value="ECO:0007669"/>
    <property type="project" value="InterPro"/>
</dbReference>
<dbReference type="GO" id="GO:0006887">
    <property type="term" value="P:exocytosis"/>
    <property type="evidence" value="ECO:0007669"/>
    <property type="project" value="UniProtKB-KW"/>
</dbReference>
<dbReference type="GO" id="GO:0015031">
    <property type="term" value="P:protein transport"/>
    <property type="evidence" value="ECO:0007669"/>
    <property type="project" value="UniProtKB-KW"/>
</dbReference>
<dbReference type="CDD" id="cd01865">
    <property type="entry name" value="Rab3"/>
    <property type="match status" value="1"/>
</dbReference>
<dbReference type="FunFam" id="3.40.50.300:FF:000206">
    <property type="entry name" value="Ras-related protein Rab-3C"/>
    <property type="match status" value="1"/>
</dbReference>
<dbReference type="Gene3D" id="3.40.50.300">
    <property type="entry name" value="P-loop containing nucleotide triphosphate hydrolases"/>
    <property type="match status" value="1"/>
</dbReference>
<dbReference type="InterPro" id="IPR027417">
    <property type="entry name" value="P-loop_NTPase"/>
</dbReference>
<dbReference type="InterPro" id="IPR037872">
    <property type="entry name" value="Rab3"/>
</dbReference>
<dbReference type="InterPro" id="IPR005225">
    <property type="entry name" value="Small_GTP-bd"/>
</dbReference>
<dbReference type="InterPro" id="IPR001806">
    <property type="entry name" value="Small_GTPase"/>
</dbReference>
<dbReference type="InterPro" id="IPR050305">
    <property type="entry name" value="Small_GTPase_Rab"/>
</dbReference>
<dbReference type="NCBIfam" id="TIGR00231">
    <property type="entry name" value="small_GTP"/>
    <property type="match status" value="1"/>
</dbReference>
<dbReference type="PANTHER" id="PTHR47980">
    <property type="entry name" value="LD44762P"/>
    <property type="match status" value="1"/>
</dbReference>
<dbReference type="Pfam" id="PF00071">
    <property type="entry name" value="Ras"/>
    <property type="match status" value="1"/>
</dbReference>
<dbReference type="PRINTS" id="PR00449">
    <property type="entry name" value="RASTRNSFRMNG"/>
</dbReference>
<dbReference type="SMART" id="SM00175">
    <property type="entry name" value="RAB"/>
    <property type="match status" value="1"/>
</dbReference>
<dbReference type="SMART" id="SM00176">
    <property type="entry name" value="RAN"/>
    <property type="match status" value="1"/>
</dbReference>
<dbReference type="SMART" id="SM00173">
    <property type="entry name" value="RAS"/>
    <property type="match status" value="1"/>
</dbReference>
<dbReference type="SMART" id="SM00174">
    <property type="entry name" value="RHO"/>
    <property type="match status" value="1"/>
</dbReference>
<dbReference type="SUPFAM" id="SSF52540">
    <property type="entry name" value="P-loop containing nucleoside triphosphate hydrolases"/>
    <property type="match status" value="1"/>
</dbReference>
<dbReference type="PROSITE" id="PS51419">
    <property type="entry name" value="RAB"/>
    <property type="match status" value="1"/>
</dbReference>
<gene>
    <name type="primary">RAB3A</name>
    <name type="ORF">QflA-12931</name>
</gene>
<reference key="1">
    <citation type="submission" date="2005-06" db="EMBL/GenBank/DDBJ databases">
        <title>DNA sequences of macaque genes expressed in brain or testis and its evolutionary implications.</title>
        <authorList>
            <consortium name="International consortium for macaque cDNA sequencing and analysis"/>
        </authorList>
    </citation>
    <scope>NUCLEOTIDE SEQUENCE [LARGE SCALE MRNA]</scope>
    <source>
        <tissue>Frontal cortex</tissue>
    </source>
</reference>
<proteinExistence type="evidence at transcript level"/>
<organism>
    <name type="scientific">Macaca fascicularis</name>
    <name type="common">Crab-eating macaque</name>
    <name type="synonym">Cynomolgus monkey</name>
    <dbReference type="NCBI Taxonomy" id="9541"/>
    <lineage>
        <taxon>Eukaryota</taxon>
        <taxon>Metazoa</taxon>
        <taxon>Chordata</taxon>
        <taxon>Craniata</taxon>
        <taxon>Vertebrata</taxon>
        <taxon>Euteleostomi</taxon>
        <taxon>Mammalia</taxon>
        <taxon>Eutheria</taxon>
        <taxon>Euarchontoglires</taxon>
        <taxon>Primates</taxon>
        <taxon>Haplorrhini</taxon>
        <taxon>Catarrhini</taxon>
        <taxon>Cercopithecidae</taxon>
        <taxon>Cercopithecinae</taxon>
        <taxon>Macaca</taxon>
    </lineage>
</organism>